<proteinExistence type="inferred from homology"/>
<feature type="chain" id="PRO_0000144887" description="L-aspartate dehydrogenase">
    <location>
        <begin position="1"/>
        <end position="280"/>
    </location>
</feature>
<feature type="active site" evidence="1">
    <location>
        <position position="232"/>
    </location>
</feature>
<feature type="binding site" evidence="1">
    <location>
        <position position="134"/>
    </location>
    <ligand>
        <name>NAD(+)</name>
        <dbReference type="ChEBI" id="CHEBI:57540"/>
    </ligand>
</feature>
<feature type="binding site" evidence="1">
    <location>
        <position position="202"/>
    </location>
    <ligand>
        <name>NAD(+)</name>
        <dbReference type="ChEBI" id="CHEBI:57540"/>
    </ligand>
</feature>
<protein>
    <recommendedName>
        <fullName evidence="1">L-aspartate dehydrogenase</fullName>
        <ecNumber evidence="1">1.4.1.21</ecNumber>
    </recommendedName>
</protein>
<organism>
    <name type="scientific">Bradyrhizobium diazoefficiens (strain JCM 10833 / BCRC 13528 / IAM 13628 / NBRC 14792 / USDA 110)</name>
    <dbReference type="NCBI Taxonomy" id="224911"/>
    <lineage>
        <taxon>Bacteria</taxon>
        <taxon>Pseudomonadati</taxon>
        <taxon>Pseudomonadota</taxon>
        <taxon>Alphaproteobacteria</taxon>
        <taxon>Hyphomicrobiales</taxon>
        <taxon>Nitrobacteraceae</taxon>
        <taxon>Bradyrhizobium</taxon>
    </lineage>
</organism>
<comment type="function">
    <text evidence="1">Specifically catalyzes the NAD or NADP-dependent dehydrogenation of L-aspartate to iminoaspartate.</text>
</comment>
<comment type="catalytic activity">
    <reaction evidence="1">
        <text>L-aspartate + NADP(+) + H2O = oxaloacetate + NH4(+) + NADPH + H(+)</text>
        <dbReference type="Rhea" id="RHEA:11784"/>
        <dbReference type="ChEBI" id="CHEBI:15377"/>
        <dbReference type="ChEBI" id="CHEBI:15378"/>
        <dbReference type="ChEBI" id="CHEBI:16452"/>
        <dbReference type="ChEBI" id="CHEBI:28938"/>
        <dbReference type="ChEBI" id="CHEBI:29991"/>
        <dbReference type="ChEBI" id="CHEBI:57783"/>
        <dbReference type="ChEBI" id="CHEBI:58349"/>
        <dbReference type="EC" id="1.4.1.21"/>
    </reaction>
</comment>
<comment type="catalytic activity">
    <reaction evidence="1">
        <text>L-aspartate + NAD(+) + H2O = oxaloacetate + NH4(+) + NADH + H(+)</text>
        <dbReference type="Rhea" id="RHEA:11788"/>
        <dbReference type="ChEBI" id="CHEBI:15377"/>
        <dbReference type="ChEBI" id="CHEBI:15378"/>
        <dbReference type="ChEBI" id="CHEBI:16452"/>
        <dbReference type="ChEBI" id="CHEBI:28938"/>
        <dbReference type="ChEBI" id="CHEBI:29991"/>
        <dbReference type="ChEBI" id="CHEBI:57540"/>
        <dbReference type="ChEBI" id="CHEBI:57945"/>
        <dbReference type="EC" id="1.4.1.21"/>
    </reaction>
</comment>
<comment type="pathway">
    <text evidence="1">Cofactor biosynthesis; NAD(+) biosynthesis; iminoaspartate from L-aspartate (dehydrogenase route): step 1/1.</text>
</comment>
<comment type="miscellaneous">
    <text evidence="1">The iminoaspartate product is unstable in aqueous solution and can decompose to oxaloacetate and ammonia.</text>
</comment>
<comment type="similarity">
    <text evidence="1">Belongs to the L-aspartate dehydrogenase family.</text>
</comment>
<sequence length="280" mass="29472">MDRRWKVMTDQTASSELRVAIAGLGSIGTKIAAALDQGEGLTLSAVAVRDPAKHQAFLNGLRRPPQVLPIDQLGEAADIVVECAPSSQLRAIVEPAVKRGKAAVVVSVGGLLDNFDLVDLARANGGRIIVPTGALIGLDAVNAAVIGTIHSVKMVTRKPIDGLKGAPFIVHNNIDIDTLREPLKLFEGTAREAAKGFPANLNVAVALSLAGVGPDRTSVQIWADPTVTRNVHRIEVEADSARFSMSIENIPSENPKTGLITALSVIALLRKQRATLCVGT</sequence>
<accession>Q89FY1</accession>
<name>ASPD_BRADU</name>
<keyword id="KW-0520">NAD</keyword>
<keyword id="KW-0521">NADP</keyword>
<keyword id="KW-0560">Oxidoreductase</keyword>
<keyword id="KW-0662">Pyridine nucleotide biosynthesis</keyword>
<keyword id="KW-1185">Reference proteome</keyword>
<reference key="1">
    <citation type="journal article" date="2002" name="DNA Res.">
        <title>Complete genomic sequence of nitrogen-fixing symbiotic bacterium Bradyrhizobium japonicum USDA110.</title>
        <authorList>
            <person name="Kaneko T."/>
            <person name="Nakamura Y."/>
            <person name="Sato S."/>
            <person name="Minamisawa K."/>
            <person name="Uchiumi T."/>
            <person name="Sasamoto S."/>
            <person name="Watanabe A."/>
            <person name="Idesawa K."/>
            <person name="Iriguchi M."/>
            <person name="Kawashima K."/>
            <person name="Kohara M."/>
            <person name="Matsumoto M."/>
            <person name="Shimpo S."/>
            <person name="Tsuruoka H."/>
            <person name="Wada T."/>
            <person name="Yamada M."/>
            <person name="Tabata S."/>
        </authorList>
    </citation>
    <scope>NUCLEOTIDE SEQUENCE [LARGE SCALE GENOMIC DNA]</scope>
    <source>
        <strain>JCM 10833 / BCRC 13528 / IAM 13628 / NBRC 14792 / USDA 110</strain>
    </source>
</reference>
<gene>
    <name evidence="1" type="primary">nadX</name>
    <name type="ordered locus">bll6567</name>
</gene>
<evidence type="ECO:0000255" key="1">
    <source>
        <dbReference type="HAMAP-Rule" id="MF_01265"/>
    </source>
</evidence>
<dbReference type="EC" id="1.4.1.21" evidence="1"/>
<dbReference type="EMBL" id="BA000040">
    <property type="protein sequence ID" value="BAC51832.1"/>
    <property type="molecule type" value="Genomic_DNA"/>
</dbReference>
<dbReference type="RefSeq" id="NP_773207.1">
    <property type="nucleotide sequence ID" value="NC_004463.1"/>
</dbReference>
<dbReference type="SMR" id="Q89FY1"/>
<dbReference type="STRING" id="224911.AAV28_30415"/>
<dbReference type="EnsemblBacteria" id="BAC51832">
    <property type="protein sequence ID" value="BAC51832"/>
    <property type="gene ID" value="BAC51832"/>
</dbReference>
<dbReference type="KEGG" id="bja:bll6567"/>
<dbReference type="PATRIC" id="fig|224911.5.peg.6724"/>
<dbReference type="eggNOG" id="COG1712">
    <property type="taxonomic scope" value="Bacteria"/>
</dbReference>
<dbReference type="HOGENOM" id="CLU_089550_0_0_5"/>
<dbReference type="InParanoid" id="Q89FY1"/>
<dbReference type="OrthoDB" id="8456681at2"/>
<dbReference type="PhylomeDB" id="Q89FY1"/>
<dbReference type="UniPathway" id="UPA00253">
    <property type="reaction ID" value="UER00456"/>
</dbReference>
<dbReference type="Proteomes" id="UP000002526">
    <property type="component" value="Chromosome"/>
</dbReference>
<dbReference type="GO" id="GO:0033735">
    <property type="term" value="F:aspartate dehydrogenase activity"/>
    <property type="evidence" value="ECO:0007669"/>
    <property type="project" value="UniProtKB-EC"/>
</dbReference>
<dbReference type="GO" id="GO:0051287">
    <property type="term" value="F:NAD binding"/>
    <property type="evidence" value="ECO:0007669"/>
    <property type="project" value="UniProtKB-UniRule"/>
</dbReference>
<dbReference type="GO" id="GO:0050661">
    <property type="term" value="F:NADP binding"/>
    <property type="evidence" value="ECO:0007669"/>
    <property type="project" value="UniProtKB-UniRule"/>
</dbReference>
<dbReference type="GO" id="GO:0016639">
    <property type="term" value="F:oxidoreductase activity, acting on the CH-NH2 group of donors, NAD or NADP as acceptor"/>
    <property type="evidence" value="ECO:0007669"/>
    <property type="project" value="UniProtKB-UniRule"/>
</dbReference>
<dbReference type="GO" id="GO:0009435">
    <property type="term" value="P:NAD biosynthetic process"/>
    <property type="evidence" value="ECO:0007669"/>
    <property type="project" value="UniProtKB-UniRule"/>
</dbReference>
<dbReference type="Gene3D" id="3.30.360.10">
    <property type="entry name" value="Dihydrodipicolinate Reductase, domain 2"/>
    <property type="match status" value="1"/>
</dbReference>
<dbReference type="Gene3D" id="3.40.50.720">
    <property type="entry name" value="NAD(P)-binding Rossmann-like Domain"/>
    <property type="match status" value="1"/>
</dbReference>
<dbReference type="HAMAP" id="MF_01265">
    <property type="entry name" value="NadX"/>
    <property type="match status" value="1"/>
</dbReference>
<dbReference type="InterPro" id="IPR005106">
    <property type="entry name" value="Asp/hSer_DH_NAD-bd"/>
</dbReference>
<dbReference type="InterPro" id="IPR002811">
    <property type="entry name" value="Asp_DH"/>
</dbReference>
<dbReference type="InterPro" id="IPR020626">
    <property type="entry name" value="Asp_DH_prok"/>
</dbReference>
<dbReference type="InterPro" id="IPR011182">
    <property type="entry name" value="L-Asp_DH"/>
</dbReference>
<dbReference type="InterPro" id="IPR036291">
    <property type="entry name" value="NAD(P)-bd_dom_sf"/>
</dbReference>
<dbReference type="NCBIfam" id="NF009825">
    <property type="entry name" value="PRK13302.1"/>
    <property type="match status" value="1"/>
</dbReference>
<dbReference type="NCBIfam" id="NF009828">
    <property type="entry name" value="PRK13303.1-3"/>
    <property type="match status" value="1"/>
</dbReference>
<dbReference type="PANTHER" id="PTHR31873:SF6">
    <property type="entry name" value="ASPARTATE DEHYDROGENASE DOMAIN-CONTAINING PROTEIN"/>
    <property type="match status" value="1"/>
</dbReference>
<dbReference type="PANTHER" id="PTHR31873">
    <property type="entry name" value="L-ASPARTATE DEHYDROGENASE-RELATED"/>
    <property type="match status" value="1"/>
</dbReference>
<dbReference type="Pfam" id="PF01958">
    <property type="entry name" value="Asp_DH_C"/>
    <property type="match status" value="1"/>
</dbReference>
<dbReference type="Pfam" id="PF03447">
    <property type="entry name" value="NAD_binding_3"/>
    <property type="match status" value="1"/>
</dbReference>
<dbReference type="PIRSF" id="PIRSF005227">
    <property type="entry name" value="Asp_dh_NAD_syn"/>
    <property type="match status" value="1"/>
</dbReference>
<dbReference type="SUPFAM" id="SSF55347">
    <property type="entry name" value="Glyceraldehyde-3-phosphate dehydrogenase-like, C-terminal domain"/>
    <property type="match status" value="1"/>
</dbReference>
<dbReference type="SUPFAM" id="SSF51735">
    <property type="entry name" value="NAD(P)-binding Rossmann-fold domains"/>
    <property type="match status" value="1"/>
</dbReference>